<gene>
    <name evidence="2" type="primary">rpsL</name>
    <name type="ordered locus">RPC_3453</name>
</gene>
<evidence type="ECO:0000250" key="1"/>
<evidence type="ECO:0000255" key="2">
    <source>
        <dbReference type="HAMAP-Rule" id="MF_00403"/>
    </source>
</evidence>
<evidence type="ECO:0000305" key="3"/>
<sequence length="123" mass="13848">MPTINQLIASPRVVQKSRKKVPALQQSPQKRGVCTRVYTTTPKKPNSALRKVAKVRLTNGFEVIGYIPGEGHNLQEHSVVMIRGGRVKDLPGVRYHILRGVLDTQGVKNRKQRRSKYGAKRPK</sequence>
<comment type="function">
    <text evidence="2">With S4 and S5 plays an important role in translational accuracy.</text>
</comment>
<comment type="function">
    <text evidence="2">Interacts with and stabilizes bases of the 16S rRNA that are involved in tRNA selection in the A site and with the mRNA backbone. Located at the interface of the 30S and 50S subunits, it traverses the body of the 30S subunit contacting proteins on the other side and probably holding the rRNA structure together. The combined cluster of proteins S8, S12 and S17 appears to hold together the shoulder and platform of the 30S subunit.</text>
</comment>
<comment type="subunit">
    <text evidence="2">Part of the 30S ribosomal subunit. Contacts proteins S8 and S17. May interact with IF1 in the 30S initiation complex.</text>
</comment>
<comment type="similarity">
    <text evidence="2">Belongs to the universal ribosomal protein uS12 family.</text>
</comment>
<keyword id="KW-0488">Methylation</keyword>
<keyword id="KW-0687">Ribonucleoprotein</keyword>
<keyword id="KW-0689">Ribosomal protein</keyword>
<keyword id="KW-0694">RNA-binding</keyword>
<keyword id="KW-0699">rRNA-binding</keyword>
<keyword id="KW-0820">tRNA-binding</keyword>
<accession>Q211E3</accession>
<name>RS12_RHOPB</name>
<reference key="1">
    <citation type="submission" date="2006-03" db="EMBL/GenBank/DDBJ databases">
        <title>Complete sequence of Rhodopseudomonas palustris BisB18.</title>
        <authorList>
            <consortium name="US DOE Joint Genome Institute"/>
            <person name="Copeland A."/>
            <person name="Lucas S."/>
            <person name="Lapidus A."/>
            <person name="Barry K."/>
            <person name="Detter J.C."/>
            <person name="Glavina del Rio T."/>
            <person name="Hammon N."/>
            <person name="Israni S."/>
            <person name="Dalin E."/>
            <person name="Tice H."/>
            <person name="Pitluck S."/>
            <person name="Chain P."/>
            <person name="Malfatti S."/>
            <person name="Shin M."/>
            <person name="Vergez L."/>
            <person name="Schmutz J."/>
            <person name="Larimer F."/>
            <person name="Land M."/>
            <person name="Hauser L."/>
            <person name="Pelletier D.A."/>
            <person name="Kyrpides N."/>
            <person name="Anderson I."/>
            <person name="Oda Y."/>
            <person name="Harwood C.S."/>
            <person name="Richardson P."/>
        </authorList>
    </citation>
    <scope>NUCLEOTIDE SEQUENCE [LARGE SCALE GENOMIC DNA]</scope>
    <source>
        <strain>BisB18</strain>
    </source>
</reference>
<organism>
    <name type="scientific">Rhodopseudomonas palustris (strain BisB18)</name>
    <dbReference type="NCBI Taxonomy" id="316056"/>
    <lineage>
        <taxon>Bacteria</taxon>
        <taxon>Pseudomonadati</taxon>
        <taxon>Pseudomonadota</taxon>
        <taxon>Alphaproteobacteria</taxon>
        <taxon>Hyphomicrobiales</taxon>
        <taxon>Nitrobacteraceae</taxon>
        <taxon>Rhodopseudomonas</taxon>
    </lineage>
</organism>
<protein>
    <recommendedName>
        <fullName evidence="2">Small ribosomal subunit protein uS12</fullName>
    </recommendedName>
    <alternativeName>
        <fullName evidence="3">30S ribosomal protein S12</fullName>
    </alternativeName>
</protein>
<proteinExistence type="inferred from homology"/>
<feature type="chain" id="PRO_0000263582" description="Small ribosomal subunit protein uS12">
    <location>
        <begin position="1"/>
        <end position="123"/>
    </location>
</feature>
<feature type="modified residue" description="3-methylthioaspartic acid" evidence="1">
    <location>
        <position position="89"/>
    </location>
</feature>
<dbReference type="EMBL" id="CP000301">
    <property type="protein sequence ID" value="ABD88993.1"/>
    <property type="molecule type" value="Genomic_DNA"/>
</dbReference>
<dbReference type="SMR" id="Q211E3"/>
<dbReference type="STRING" id="316056.RPC_3453"/>
<dbReference type="KEGG" id="rpc:RPC_3453"/>
<dbReference type="eggNOG" id="COG0048">
    <property type="taxonomic scope" value="Bacteria"/>
</dbReference>
<dbReference type="HOGENOM" id="CLU_104295_1_2_5"/>
<dbReference type="OrthoDB" id="9802366at2"/>
<dbReference type="GO" id="GO:0015935">
    <property type="term" value="C:small ribosomal subunit"/>
    <property type="evidence" value="ECO:0007669"/>
    <property type="project" value="InterPro"/>
</dbReference>
<dbReference type="GO" id="GO:0019843">
    <property type="term" value="F:rRNA binding"/>
    <property type="evidence" value="ECO:0007669"/>
    <property type="project" value="UniProtKB-UniRule"/>
</dbReference>
<dbReference type="GO" id="GO:0003735">
    <property type="term" value="F:structural constituent of ribosome"/>
    <property type="evidence" value="ECO:0007669"/>
    <property type="project" value="InterPro"/>
</dbReference>
<dbReference type="GO" id="GO:0000049">
    <property type="term" value="F:tRNA binding"/>
    <property type="evidence" value="ECO:0007669"/>
    <property type="project" value="UniProtKB-UniRule"/>
</dbReference>
<dbReference type="GO" id="GO:0006412">
    <property type="term" value="P:translation"/>
    <property type="evidence" value="ECO:0007669"/>
    <property type="project" value="UniProtKB-UniRule"/>
</dbReference>
<dbReference type="CDD" id="cd03368">
    <property type="entry name" value="Ribosomal_S12"/>
    <property type="match status" value="1"/>
</dbReference>
<dbReference type="FunFam" id="2.40.50.140:FF:000001">
    <property type="entry name" value="30S ribosomal protein S12"/>
    <property type="match status" value="1"/>
</dbReference>
<dbReference type="Gene3D" id="2.40.50.140">
    <property type="entry name" value="Nucleic acid-binding proteins"/>
    <property type="match status" value="1"/>
</dbReference>
<dbReference type="HAMAP" id="MF_00403_B">
    <property type="entry name" value="Ribosomal_uS12_B"/>
    <property type="match status" value="1"/>
</dbReference>
<dbReference type="InterPro" id="IPR012340">
    <property type="entry name" value="NA-bd_OB-fold"/>
</dbReference>
<dbReference type="InterPro" id="IPR006032">
    <property type="entry name" value="Ribosomal_uS12"/>
</dbReference>
<dbReference type="InterPro" id="IPR005679">
    <property type="entry name" value="Ribosomal_uS12_bac"/>
</dbReference>
<dbReference type="NCBIfam" id="TIGR00981">
    <property type="entry name" value="rpsL_bact"/>
    <property type="match status" value="1"/>
</dbReference>
<dbReference type="PANTHER" id="PTHR11652">
    <property type="entry name" value="30S RIBOSOMAL PROTEIN S12 FAMILY MEMBER"/>
    <property type="match status" value="1"/>
</dbReference>
<dbReference type="Pfam" id="PF00164">
    <property type="entry name" value="Ribosom_S12_S23"/>
    <property type="match status" value="1"/>
</dbReference>
<dbReference type="PIRSF" id="PIRSF002133">
    <property type="entry name" value="Ribosomal_S12/S23"/>
    <property type="match status" value="1"/>
</dbReference>
<dbReference type="PRINTS" id="PR01034">
    <property type="entry name" value="RIBOSOMALS12"/>
</dbReference>
<dbReference type="SUPFAM" id="SSF50249">
    <property type="entry name" value="Nucleic acid-binding proteins"/>
    <property type="match status" value="1"/>
</dbReference>
<dbReference type="PROSITE" id="PS00055">
    <property type="entry name" value="RIBOSOMAL_S12"/>
    <property type="match status" value="1"/>
</dbReference>